<organism>
    <name type="scientific">Salmonella schwarzengrund (strain CVM19633)</name>
    <dbReference type="NCBI Taxonomy" id="439843"/>
    <lineage>
        <taxon>Bacteria</taxon>
        <taxon>Pseudomonadati</taxon>
        <taxon>Pseudomonadota</taxon>
        <taxon>Gammaproteobacteria</taxon>
        <taxon>Enterobacterales</taxon>
        <taxon>Enterobacteriaceae</taxon>
        <taxon>Salmonella</taxon>
    </lineage>
</organism>
<feature type="chain" id="PRO_1000129867" description="GMP reductase">
    <location>
        <begin position="1"/>
        <end position="347"/>
    </location>
</feature>
<feature type="active site" description="Thioimidate intermediate" evidence="1">
    <location>
        <position position="186"/>
    </location>
</feature>
<feature type="binding site" evidence="1">
    <location>
        <begin position="108"/>
        <end position="131"/>
    </location>
    <ligand>
        <name>NADP(+)</name>
        <dbReference type="ChEBI" id="CHEBI:58349"/>
    </ligand>
</feature>
<feature type="binding site" evidence="1">
    <location>
        <position position="181"/>
    </location>
    <ligand>
        <name>K(+)</name>
        <dbReference type="ChEBI" id="CHEBI:29103"/>
    </ligand>
</feature>
<feature type="binding site" evidence="1">
    <location>
        <position position="183"/>
    </location>
    <ligand>
        <name>K(+)</name>
        <dbReference type="ChEBI" id="CHEBI:29103"/>
    </ligand>
</feature>
<feature type="binding site" evidence="1">
    <location>
        <begin position="216"/>
        <end position="239"/>
    </location>
    <ligand>
        <name>NADP(+)</name>
        <dbReference type="ChEBI" id="CHEBI:58349"/>
    </ligand>
</feature>
<keyword id="KW-0479">Metal-binding</keyword>
<keyword id="KW-0521">NADP</keyword>
<keyword id="KW-0560">Oxidoreductase</keyword>
<keyword id="KW-0630">Potassium</keyword>
<comment type="function">
    <text evidence="1">Catalyzes the irreversible NADPH-dependent deamination of GMP to IMP. It functions in the conversion of nucleobase, nucleoside and nucleotide derivatives of G to A nucleotides, and in maintaining the intracellular balance of A and G nucleotides.</text>
</comment>
<comment type="catalytic activity">
    <reaction evidence="1">
        <text>IMP + NH4(+) + NADP(+) = GMP + NADPH + 2 H(+)</text>
        <dbReference type="Rhea" id="RHEA:17185"/>
        <dbReference type="ChEBI" id="CHEBI:15378"/>
        <dbReference type="ChEBI" id="CHEBI:28938"/>
        <dbReference type="ChEBI" id="CHEBI:57783"/>
        <dbReference type="ChEBI" id="CHEBI:58053"/>
        <dbReference type="ChEBI" id="CHEBI:58115"/>
        <dbReference type="ChEBI" id="CHEBI:58349"/>
        <dbReference type="EC" id="1.7.1.7"/>
    </reaction>
</comment>
<comment type="subunit">
    <text evidence="1">Homotetramer.</text>
</comment>
<comment type="similarity">
    <text evidence="1">Belongs to the IMPDH/GMPR family. GuaC type 1 subfamily.</text>
</comment>
<sequence length="347" mass="37140">MRIEEDLKLGFKDVLIRPKRSTLKSRSDVELERQFTFKHSGQTWSGVPIIAANMDTVGTFEMAQALAGFDILTAVHKHYTVEEWAAFINTASADVLKHVMVSTGTSDADFEKTVQILALDPALNFVCIDVANGYSEHFVQFVAKAREAWPTKTICAGNVVTGEMCEELILSGADIVKVGIGPGSVCTTRVKTGVGYPQLSAVIECADAAHGLGGMIVSDGGCTMPGDVAKAFGGGADFVMLGGMLAGHEESGGSVVEENGEKFMLFYGMSSESAMNRHVGGVAKYRAAEGKTVKLPLRGPVGNTARDILGGLRSACTYVGASRLKELTKRTTFIRVQEQENRIFNSL</sequence>
<dbReference type="EC" id="1.7.1.7" evidence="1"/>
<dbReference type="EMBL" id="CP001127">
    <property type="protein sequence ID" value="ACF88869.1"/>
    <property type="molecule type" value="Genomic_DNA"/>
</dbReference>
<dbReference type="RefSeq" id="WP_001217363.1">
    <property type="nucleotide sequence ID" value="NC_011094.1"/>
</dbReference>
<dbReference type="SMR" id="B4TXJ0"/>
<dbReference type="KEGG" id="sew:SeSA_A0158"/>
<dbReference type="HOGENOM" id="CLU_022552_5_3_6"/>
<dbReference type="Proteomes" id="UP000001865">
    <property type="component" value="Chromosome"/>
</dbReference>
<dbReference type="GO" id="GO:0005829">
    <property type="term" value="C:cytosol"/>
    <property type="evidence" value="ECO:0007669"/>
    <property type="project" value="TreeGrafter"/>
</dbReference>
<dbReference type="GO" id="GO:1902560">
    <property type="term" value="C:GMP reductase complex"/>
    <property type="evidence" value="ECO:0007669"/>
    <property type="project" value="InterPro"/>
</dbReference>
<dbReference type="GO" id="GO:0003920">
    <property type="term" value="F:GMP reductase activity"/>
    <property type="evidence" value="ECO:0007669"/>
    <property type="project" value="UniProtKB-UniRule"/>
</dbReference>
<dbReference type="GO" id="GO:0046872">
    <property type="term" value="F:metal ion binding"/>
    <property type="evidence" value="ECO:0007669"/>
    <property type="project" value="UniProtKB-KW"/>
</dbReference>
<dbReference type="GO" id="GO:0006163">
    <property type="term" value="P:purine nucleotide metabolic process"/>
    <property type="evidence" value="ECO:0007669"/>
    <property type="project" value="UniProtKB-UniRule"/>
</dbReference>
<dbReference type="CDD" id="cd00381">
    <property type="entry name" value="IMPDH"/>
    <property type="match status" value="1"/>
</dbReference>
<dbReference type="FunFam" id="3.20.20.70:FF:000012">
    <property type="entry name" value="GMP reductase"/>
    <property type="match status" value="1"/>
</dbReference>
<dbReference type="Gene3D" id="3.20.20.70">
    <property type="entry name" value="Aldolase class I"/>
    <property type="match status" value="1"/>
</dbReference>
<dbReference type="HAMAP" id="MF_00596">
    <property type="entry name" value="GMP_reduct_type1"/>
    <property type="match status" value="1"/>
</dbReference>
<dbReference type="InterPro" id="IPR013785">
    <property type="entry name" value="Aldolase_TIM"/>
</dbReference>
<dbReference type="InterPro" id="IPR050139">
    <property type="entry name" value="GMP_reductase"/>
</dbReference>
<dbReference type="InterPro" id="IPR005993">
    <property type="entry name" value="GMPR"/>
</dbReference>
<dbReference type="InterPro" id="IPR015875">
    <property type="entry name" value="IMP_DH/GMP_Rdtase_CS"/>
</dbReference>
<dbReference type="InterPro" id="IPR001093">
    <property type="entry name" value="IMP_DH_GMPRt"/>
</dbReference>
<dbReference type="NCBIfam" id="TIGR01305">
    <property type="entry name" value="GMP_reduct_1"/>
    <property type="match status" value="1"/>
</dbReference>
<dbReference type="NCBIfam" id="NF003470">
    <property type="entry name" value="PRK05096.1"/>
    <property type="match status" value="1"/>
</dbReference>
<dbReference type="PANTHER" id="PTHR43170">
    <property type="entry name" value="GMP REDUCTASE"/>
    <property type="match status" value="1"/>
</dbReference>
<dbReference type="PANTHER" id="PTHR43170:SF5">
    <property type="entry name" value="GMP REDUCTASE"/>
    <property type="match status" value="1"/>
</dbReference>
<dbReference type="Pfam" id="PF00478">
    <property type="entry name" value="IMPDH"/>
    <property type="match status" value="1"/>
</dbReference>
<dbReference type="PIRSF" id="PIRSF000235">
    <property type="entry name" value="GMP_reductase"/>
    <property type="match status" value="1"/>
</dbReference>
<dbReference type="SMART" id="SM01240">
    <property type="entry name" value="IMPDH"/>
    <property type="match status" value="1"/>
</dbReference>
<dbReference type="SUPFAM" id="SSF51412">
    <property type="entry name" value="Inosine monophosphate dehydrogenase (IMPDH)"/>
    <property type="match status" value="1"/>
</dbReference>
<dbReference type="PROSITE" id="PS00487">
    <property type="entry name" value="IMP_DH_GMP_RED"/>
    <property type="match status" value="1"/>
</dbReference>
<proteinExistence type="inferred from homology"/>
<name>GUAC_SALSV</name>
<accession>B4TXJ0</accession>
<protein>
    <recommendedName>
        <fullName evidence="1">GMP reductase</fullName>
        <ecNumber evidence="1">1.7.1.7</ecNumber>
    </recommendedName>
    <alternativeName>
        <fullName evidence="1">Guanosine 5'-monophosphate oxidoreductase</fullName>
        <shortName evidence="1">Guanosine monophosphate reductase</shortName>
    </alternativeName>
</protein>
<reference key="1">
    <citation type="journal article" date="2011" name="J. Bacteriol.">
        <title>Comparative genomics of 28 Salmonella enterica isolates: evidence for CRISPR-mediated adaptive sublineage evolution.</title>
        <authorList>
            <person name="Fricke W.F."/>
            <person name="Mammel M.K."/>
            <person name="McDermott P.F."/>
            <person name="Tartera C."/>
            <person name="White D.G."/>
            <person name="Leclerc J.E."/>
            <person name="Ravel J."/>
            <person name="Cebula T.A."/>
        </authorList>
    </citation>
    <scope>NUCLEOTIDE SEQUENCE [LARGE SCALE GENOMIC DNA]</scope>
    <source>
        <strain>CVM19633</strain>
    </source>
</reference>
<gene>
    <name evidence="1" type="primary">guaC</name>
    <name type="ordered locus">SeSA_A0158</name>
</gene>
<evidence type="ECO:0000255" key="1">
    <source>
        <dbReference type="HAMAP-Rule" id="MF_00596"/>
    </source>
</evidence>